<proteinExistence type="evidence at protein level"/>
<evidence type="ECO:0000250" key="1">
    <source>
        <dbReference type="UniProtKB" id="C0HJU7"/>
    </source>
</evidence>
<evidence type="ECO:0000250" key="2">
    <source>
        <dbReference type="UniProtKB" id="P31713"/>
    </source>
</evidence>
<evidence type="ECO:0000255" key="3">
    <source>
        <dbReference type="PROSITE-ProRule" id="PRU00031"/>
    </source>
</evidence>
<evidence type="ECO:0000269" key="4">
    <source>
    </source>
</evidence>
<evidence type="ECO:0000303" key="5">
    <source>
    </source>
</evidence>
<evidence type="ECO:0000305" key="6"/>
<protein>
    <recommendedName>
        <fullName evidence="6">PI-stichotoxin-Hmg3a</fullName>
        <shortName evidence="6">PI-SHTX-Hmg3a</shortName>
    </recommendedName>
    <alternativeName>
        <fullName evidence="5">Kunitz-type serine protease inhibitor HMRG1</fullName>
    </alternativeName>
</protein>
<comment type="function">
    <text evidence="1">Serine protease inhibitor that inhibits trypsin (Ki=50 nM) and probably also chymotrypsin (Kd=1.6 nM). Has an anti-inflammatory effect in LPS-activated macrophages in vitro, specifically reducing release of TNF and IL6 but not nitric oxide and reducing expression of IL1B precursor.</text>
</comment>
<comment type="subcellular location">
    <subcellularLocation>
        <location evidence="6">Secreted</location>
    </subcellularLocation>
    <subcellularLocation>
        <location evidence="6">Nematocyst</location>
    </subcellularLocation>
</comment>
<comment type="PTM">
    <text evidence="4">Contains three disulfide bonds.</text>
</comment>
<comment type="mass spectrometry" mass="6152.93" method="MALDI" evidence="4"/>
<comment type="miscellaneous">
    <text evidence="6">A synonymy between H.magnifica and R.crispa is controversial.</text>
</comment>
<comment type="similarity">
    <text evidence="6">Belongs to the venom Kunitz-type family. Sea anemone type 2 potassium channel toxin subfamily.</text>
</comment>
<sequence length="56" mass="6157">RGICLEPKVVGPCKARIRRFYYDSETGKCTPFIYGGCGGNGNNFETLHACRGICRA</sequence>
<name>3API_HETMG</name>
<feature type="peptide" id="PRO_0000443113" description="PI-stichotoxin-Hmg3a" evidence="4">
    <location>
        <begin position="1"/>
        <end position="56"/>
    </location>
</feature>
<feature type="domain" description="BPTI/Kunitz inhibitor" evidence="3">
    <location>
        <begin position="4"/>
        <end position="54"/>
    </location>
</feature>
<feature type="site" description="Reactive bond for trypsin" evidence="2">
    <location>
        <begin position="14"/>
        <end position="15"/>
    </location>
</feature>
<feature type="disulfide bond" evidence="3">
    <location>
        <begin position="4"/>
        <end position="54"/>
    </location>
</feature>
<feature type="disulfide bond" evidence="3">
    <location>
        <begin position="13"/>
        <end position="37"/>
    </location>
</feature>
<feature type="disulfide bond" evidence="3">
    <location>
        <begin position="29"/>
        <end position="50"/>
    </location>
</feature>
<organism evidence="5">
    <name type="scientific">Heteractis magnifica</name>
    <name type="common">Magnificent sea anemone</name>
    <name type="synonym">Radianthus magnifica</name>
    <dbReference type="NCBI Taxonomy" id="38281"/>
    <lineage>
        <taxon>Eukaryota</taxon>
        <taxon>Metazoa</taxon>
        <taxon>Cnidaria</taxon>
        <taxon>Anthozoa</taxon>
        <taxon>Hexacorallia</taxon>
        <taxon>Actiniaria</taxon>
        <taxon>Stichodactylidae</taxon>
        <taxon>Heteractis</taxon>
    </lineage>
</organism>
<accession>C0HK72</accession>
<reference evidence="6" key="1">
    <citation type="journal article" date="2018" name="J. Proteomics">
        <title>Peptide fingerprinting of the sea anemone Heteractis magnifica mucus revealed neurotoxins, Kunitz-type proteinase inhibitors and a new beta-defensin alpha-amylase inhibitor.</title>
        <authorList>
            <person name="Sintsova O."/>
            <person name="Gladkikh I."/>
            <person name="Chausova V."/>
            <person name="Monastyrnaya M."/>
            <person name="Anastyuk S."/>
            <person name="Chernikov O."/>
            <person name="Yurchenko E."/>
            <person name="Aminin D."/>
            <person name="Isaeva M."/>
            <person name="Leychenko E."/>
            <person name="Kozlovskaya E."/>
        </authorList>
    </citation>
    <scope>PROTEIN SEQUENCE</scope>
    <scope>FUNCTION</scope>
    <scope>MASS SPECTROMETRY</scope>
    <scope>PRESENCE OF DISULFIDE BONDS</scope>
</reference>
<keyword id="KW-0903">Direct protein sequencing</keyword>
<keyword id="KW-1015">Disulfide bond</keyword>
<keyword id="KW-0166">Nematocyst</keyword>
<keyword id="KW-0646">Protease inhibitor</keyword>
<keyword id="KW-0964">Secreted</keyword>
<keyword id="KW-0722">Serine protease inhibitor</keyword>
<dbReference type="SMR" id="C0HK72"/>
<dbReference type="GO" id="GO:0005615">
    <property type="term" value="C:extracellular space"/>
    <property type="evidence" value="ECO:0007669"/>
    <property type="project" value="TreeGrafter"/>
</dbReference>
<dbReference type="GO" id="GO:0042151">
    <property type="term" value="C:nematocyst"/>
    <property type="evidence" value="ECO:0007669"/>
    <property type="project" value="UniProtKB-SubCell"/>
</dbReference>
<dbReference type="GO" id="GO:0004867">
    <property type="term" value="F:serine-type endopeptidase inhibitor activity"/>
    <property type="evidence" value="ECO:0007669"/>
    <property type="project" value="UniProtKB-KW"/>
</dbReference>
<dbReference type="CDD" id="cd22618">
    <property type="entry name" value="Kunitz_SHPI"/>
    <property type="match status" value="1"/>
</dbReference>
<dbReference type="FunFam" id="4.10.410.10:FF:000021">
    <property type="entry name" value="Serine protease inhibitor, putative"/>
    <property type="match status" value="1"/>
</dbReference>
<dbReference type="Gene3D" id="4.10.410.10">
    <property type="entry name" value="Pancreatic trypsin inhibitor Kunitz domain"/>
    <property type="match status" value="1"/>
</dbReference>
<dbReference type="InterPro" id="IPR002223">
    <property type="entry name" value="Kunitz_BPTI"/>
</dbReference>
<dbReference type="InterPro" id="IPR036880">
    <property type="entry name" value="Kunitz_BPTI_sf"/>
</dbReference>
<dbReference type="InterPro" id="IPR020901">
    <property type="entry name" value="Prtase_inh_Kunz-CS"/>
</dbReference>
<dbReference type="InterPro" id="IPR050098">
    <property type="entry name" value="TFPI/VKTCI-like"/>
</dbReference>
<dbReference type="PANTHER" id="PTHR10083:SF374">
    <property type="entry name" value="BPTI_KUNITZ INHIBITOR DOMAIN-CONTAINING PROTEIN"/>
    <property type="match status" value="1"/>
</dbReference>
<dbReference type="PANTHER" id="PTHR10083">
    <property type="entry name" value="KUNITZ-TYPE PROTEASE INHIBITOR-RELATED"/>
    <property type="match status" value="1"/>
</dbReference>
<dbReference type="Pfam" id="PF00014">
    <property type="entry name" value="Kunitz_BPTI"/>
    <property type="match status" value="1"/>
</dbReference>
<dbReference type="PRINTS" id="PR00759">
    <property type="entry name" value="BASICPTASE"/>
</dbReference>
<dbReference type="SMART" id="SM00131">
    <property type="entry name" value="KU"/>
    <property type="match status" value="1"/>
</dbReference>
<dbReference type="SUPFAM" id="SSF57362">
    <property type="entry name" value="BPTI-like"/>
    <property type="match status" value="1"/>
</dbReference>
<dbReference type="PROSITE" id="PS00280">
    <property type="entry name" value="BPTI_KUNITZ_1"/>
    <property type="match status" value="1"/>
</dbReference>
<dbReference type="PROSITE" id="PS50279">
    <property type="entry name" value="BPTI_KUNITZ_2"/>
    <property type="match status" value="1"/>
</dbReference>